<reference key="1">
    <citation type="journal article" date="2004" name="Nat. Genet.">
        <title>Complete sequencing and characterization of 21,243 full-length human cDNAs.</title>
        <authorList>
            <person name="Ota T."/>
            <person name="Suzuki Y."/>
            <person name="Nishikawa T."/>
            <person name="Otsuki T."/>
            <person name="Sugiyama T."/>
            <person name="Irie R."/>
            <person name="Wakamatsu A."/>
            <person name="Hayashi K."/>
            <person name="Sato H."/>
            <person name="Nagai K."/>
            <person name="Kimura K."/>
            <person name="Makita H."/>
            <person name="Sekine M."/>
            <person name="Obayashi M."/>
            <person name="Nishi T."/>
            <person name="Shibahara T."/>
            <person name="Tanaka T."/>
            <person name="Ishii S."/>
            <person name="Yamamoto J."/>
            <person name="Saito K."/>
            <person name="Kawai Y."/>
            <person name="Isono Y."/>
            <person name="Nakamura Y."/>
            <person name="Nagahari K."/>
            <person name="Murakami K."/>
            <person name="Yasuda T."/>
            <person name="Iwayanagi T."/>
            <person name="Wagatsuma M."/>
            <person name="Shiratori A."/>
            <person name="Sudo H."/>
            <person name="Hosoiri T."/>
            <person name="Kaku Y."/>
            <person name="Kodaira H."/>
            <person name="Kondo H."/>
            <person name="Sugawara M."/>
            <person name="Takahashi M."/>
            <person name="Kanda K."/>
            <person name="Yokoi T."/>
            <person name="Furuya T."/>
            <person name="Kikkawa E."/>
            <person name="Omura Y."/>
            <person name="Abe K."/>
            <person name="Kamihara K."/>
            <person name="Katsuta N."/>
            <person name="Sato K."/>
            <person name="Tanikawa M."/>
            <person name="Yamazaki M."/>
            <person name="Ninomiya K."/>
            <person name="Ishibashi T."/>
            <person name="Yamashita H."/>
            <person name="Murakawa K."/>
            <person name="Fujimori K."/>
            <person name="Tanai H."/>
            <person name="Kimata M."/>
            <person name="Watanabe M."/>
            <person name="Hiraoka S."/>
            <person name="Chiba Y."/>
            <person name="Ishida S."/>
            <person name="Ono Y."/>
            <person name="Takiguchi S."/>
            <person name="Watanabe S."/>
            <person name="Yosida M."/>
            <person name="Hotuta T."/>
            <person name="Kusano J."/>
            <person name="Kanehori K."/>
            <person name="Takahashi-Fujii A."/>
            <person name="Hara H."/>
            <person name="Tanase T.-O."/>
            <person name="Nomura Y."/>
            <person name="Togiya S."/>
            <person name="Komai F."/>
            <person name="Hara R."/>
            <person name="Takeuchi K."/>
            <person name="Arita M."/>
            <person name="Imose N."/>
            <person name="Musashino K."/>
            <person name="Yuuki H."/>
            <person name="Oshima A."/>
            <person name="Sasaki N."/>
            <person name="Aotsuka S."/>
            <person name="Yoshikawa Y."/>
            <person name="Matsunawa H."/>
            <person name="Ichihara T."/>
            <person name="Shiohata N."/>
            <person name="Sano S."/>
            <person name="Moriya S."/>
            <person name="Momiyama H."/>
            <person name="Satoh N."/>
            <person name="Takami S."/>
            <person name="Terashima Y."/>
            <person name="Suzuki O."/>
            <person name="Nakagawa S."/>
            <person name="Senoh A."/>
            <person name="Mizoguchi H."/>
            <person name="Goto Y."/>
            <person name="Shimizu F."/>
            <person name="Wakebe H."/>
            <person name="Hishigaki H."/>
            <person name="Watanabe T."/>
            <person name="Sugiyama A."/>
            <person name="Takemoto M."/>
            <person name="Kawakami B."/>
            <person name="Yamazaki M."/>
            <person name="Watanabe K."/>
            <person name="Kumagai A."/>
            <person name="Itakura S."/>
            <person name="Fukuzumi Y."/>
            <person name="Fujimori Y."/>
            <person name="Komiyama M."/>
            <person name="Tashiro H."/>
            <person name="Tanigami A."/>
            <person name="Fujiwara T."/>
            <person name="Ono T."/>
            <person name="Yamada K."/>
            <person name="Fujii Y."/>
            <person name="Ozaki K."/>
            <person name="Hirao M."/>
            <person name="Ohmori Y."/>
            <person name="Kawabata A."/>
            <person name="Hikiji T."/>
            <person name="Kobatake N."/>
            <person name="Inagaki H."/>
            <person name="Ikema Y."/>
            <person name="Okamoto S."/>
            <person name="Okitani R."/>
            <person name="Kawakami T."/>
            <person name="Noguchi S."/>
            <person name="Itoh T."/>
            <person name="Shigeta K."/>
            <person name="Senba T."/>
            <person name="Matsumura K."/>
            <person name="Nakajima Y."/>
            <person name="Mizuno T."/>
            <person name="Morinaga M."/>
            <person name="Sasaki M."/>
            <person name="Togashi T."/>
            <person name="Oyama M."/>
            <person name="Hata H."/>
            <person name="Watanabe M."/>
            <person name="Komatsu T."/>
            <person name="Mizushima-Sugano J."/>
            <person name="Satoh T."/>
            <person name="Shirai Y."/>
            <person name="Takahashi Y."/>
            <person name="Nakagawa K."/>
            <person name="Okumura K."/>
            <person name="Nagase T."/>
            <person name="Nomura N."/>
            <person name="Kikuchi H."/>
            <person name="Masuho Y."/>
            <person name="Yamashita R."/>
            <person name="Nakai K."/>
            <person name="Yada T."/>
            <person name="Nakamura Y."/>
            <person name="Ohara O."/>
            <person name="Isogai T."/>
            <person name="Sugano S."/>
        </authorList>
    </citation>
    <scope>NUCLEOTIDE SEQUENCE [LARGE SCALE MRNA]</scope>
    <scope>VARIANT VAL-242</scope>
    <source>
        <tissue>Esophagus</tissue>
    </source>
</reference>
<reference key="2">
    <citation type="journal article" date="2007" name="BMC Genomics">
        <title>The full-ORF clone resource of the German cDNA consortium.</title>
        <authorList>
            <person name="Bechtel S."/>
            <person name="Rosenfelder H."/>
            <person name="Duda A."/>
            <person name="Schmidt C.P."/>
            <person name="Ernst U."/>
            <person name="Wellenreuther R."/>
            <person name="Mehrle A."/>
            <person name="Schuster C."/>
            <person name="Bahr A."/>
            <person name="Bloecker H."/>
            <person name="Heubner D."/>
            <person name="Hoerlein A."/>
            <person name="Michel G."/>
            <person name="Wedler H."/>
            <person name="Koehrer K."/>
            <person name="Ottenwaelder B."/>
            <person name="Poustka A."/>
            <person name="Wiemann S."/>
            <person name="Schupp I."/>
        </authorList>
    </citation>
    <scope>NUCLEOTIDE SEQUENCE [LARGE SCALE MRNA]</scope>
    <scope>VARIANTS VAL-242; ALA-325 AND SER-348</scope>
    <source>
        <tissue>Cervix</tissue>
    </source>
</reference>
<reference key="3">
    <citation type="journal article" date="2005" name="Nature">
        <title>Generation and annotation of the DNA sequences of human chromosomes 2 and 4.</title>
        <authorList>
            <person name="Hillier L.W."/>
            <person name="Graves T.A."/>
            <person name="Fulton R.S."/>
            <person name="Fulton L.A."/>
            <person name="Pepin K.H."/>
            <person name="Minx P."/>
            <person name="Wagner-McPherson C."/>
            <person name="Layman D."/>
            <person name="Wylie K."/>
            <person name="Sekhon M."/>
            <person name="Becker M.C."/>
            <person name="Fewell G.A."/>
            <person name="Delehaunty K.D."/>
            <person name="Miner T.L."/>
            <person name="Nash W.E."/>
            <person name="Kremitzki C."/>
            <person name="Oddy L."/>
            <person name="Du H."/>
            <person name="Sun H."/>
            <person name="Bradshaw-Cordum H."/>
            <person name="Ali J."/>
            <person name="Carter J."/>
            <person name="Cordes M."/>
            <person name="Harris A."/>
            <person name="Isak A."/>
            <person name="van Brunt A."/>
            <person name="Nguyen C."/>
            <person name="Du F."/>
            <person name="Courtney L."/>
            <person name="Kalicki J."/>
            <person name="Ozersky P."/>
            <person name="Abbott S."/>
            <person name="Armstrong J."/>
            <person name="Belter E.A."/>
            <person name="Caruso L."/>
            <person name="Cedroni M."/>
            <person name="Cotton M."/>
            <person name="Davidson T."/>
            <person name="Desai A."/>
            <person name="Elliott G."/>
            <person name="Erb T."/>
            <person name="Fronick C."/>
            <person name="Gaige T."/>
            <person name="Haakenson W."/>
            <person name="Haglund K."/>
            <person name="Holmes A."/>
            <person name="Harkins R."/>
            <person name="Kim K."/>
            <person name="Kruchowski S.S."/>
            <person name="Strong C.M."/>
            <person name="Grewal N."/>
            <person name="Goyea E."/>
            <person name="Hou S."/>
            <person name="Levy A."/>
            <person name="Martinka S."/>
            <person name="Mead K."/>
            <person name="McLellan M.D."/>
            <person name="Meyer R."/>
            <person name="Randall-Maher J."/>
            <person name="Tomlinson C."/>
            <person name="Dauphin-Kohlberg S."/>
            <person name="Kozlowicz-Reilly A."/>
            <person name="Shah N."/>
            <person name="Swearengen-Shahid S."/>
            <person name="Snider J."/>
            <person name="Strong J.T."/>
            <person name="Thompson J."/>
            <person name="Yoakum M."/>
            <person name="Leonard S."/>
            <person name="Pearman C."/>
            <person name="Trani L."/>
            <person name="Radionenko M."/>
            <person name="Waligorski J.E."/>
            <person name="Wang C."/>
            <person name="Rock S.M."/>
            <person name="Tin-Wollam A.-M."/>
            <person name="Maupin R."/>
            <person name="Latreille P."/>
            <person name="Wendl M.C."/>
            <person name="Yang S.-P."/>
            <person name="Pohl C."/>
            <person name="Wallis J.W."/>
            <person name="Spieth J."/>
            <person name="Bieri T.A."/>
            <person name="Berkowicz N."/>
            <person name="Nelson J.O."/>
            <person name="Osborne J."/>
            <person name="Ding L."/>
            <person name="Meyer R."/>
            <person name="Sabo A."/>
            <person name="Shotland Y."/>
            <person name="Sinha P."/>
            <person name="Wohldmann P.E."/>
            <person name="Cook L.L."/>
            <person name="Hickenbotham M.T."/>
            <person name="Eldred J."/>
            <person name="Williams D."/>
            <person name="Jones T.A."/>
            <person name="She X."/>
            <person name="Ciccarelli F.D."/>
            <person name="Izaurralde E."/>
            <person name="Taylor J."/>
            <person name="Schmutz J."/>
            <person name="Myers R.M."/>
            <person name="Cox D.R."/>
            <person name="Huang X."/>
            <person name="McPherson J.D."/>
            <person name="Mardis E.R."/>
            <person name="Clifton S.W."/>
            <person name="Warren W.C."/>
            <person name="Chinwalla A.T."/>
            <person name="Eddy S.R."/>
            <person name="Marra M.A."/>
            <person name="Ovcharenko I."/>
            <person name="Furey T.S."/>
            <person name="Miller W."/>
            <person name="Eichler E.E."/>
            <person name="Bork P."/>
            <person name="Suyama M."/>
            <person name="Torrents D."/>
            <person name="Waterston R.H."/>
            <person name="Wilson R.K."/>
        </authorList>
    </citation>
    <scope>NUCLEOTIDE SEQUENCE [LARGE SCALE GENOMIC DNA]</scope>
</reference>
<reference key="4">
    <citation type="journal article" date="2004" name="Genome Res.">
        <title>The status, quality, and expansion of the NIH full-length cDNA project: the Mammalian Gene Collection (MGC).</title>
        <authorList>
            <consortium name="The MGC Project Team"/>
        </authorList>
    </citation>
    <scope>NUCLEOTIDE SEQUENCE [LARGE SCALE MRNA]</scope>
    <scope>VARIANTS VAL-242; ALA-325 AND SER-348</scope>
</reference>
<reference key="5">
    <citation type="journal article" date="2014" name="PLoS ONE">
        <title>HATL5: a cell surface serine protease differentially expressed in epithelial cancers.</title>
        <authorList>
            <person name="Miller G.S."/>
            <person name="Zoratti G.L."/>
            <person name="Murray A.S."/>
            <person name="Bergum C."/>
            <person name="Tanabe L.M."/>
            <person name="List K."/>
        </authorList>
    </citation>
    <scope>FUNCTION</scope>
    <scope>ACTIVITY REGULATION</scope>
    <scope>SUBCELLULAR LOCATION</scope>
</reference>
<proteinExistence type="evidence at protein level"/>
<accession>Q86T26</accession>
<accession>A8K4D9</accession>
<protein>
    <recommendedName>
        <fullName>Transmembrane protease serine 11B</fullName>
        <ecNumber>3.4.21.-</ecNumber>
    </recommendedName>
    <alternativeName>
        <fullName>Airway trypsin-like protease 5</fullName>
    </alternativeName>
</protein>
<name>TM11B_HUMAN</name>
<organism>
    <name type="scientific">Homo sapiens</name>
    <name type="common">Human</name>
    <dbReference type="NCBI Taxonomy" id="9606"/>
    <lineage>
        <taxon>Eukaryota</taxon>
        <taxon>Metazoa</taxon>
        <taxon>Chordata</taxon>
        <taxon>Craniata</taxon>
        <taxon>Vertebrata</taxon>
        <taxon>Euteleostomi</taxon>
        <taxon>Mammalia</taxon>
        <taxon>Eutheria</taxon>
        <taxon>Euarchontoglires</taxon>
        <taxon>Primates</taxon>
        <taxon>Haplorrhini</taxon>
        <taxon>Catarrhini</taxon>
        <taxon>Hominidae</taxon>
        <taxon>Homo</taxon>
    </lineage>
</organism>
<feature type="chain" id="PRO_0000299319" description="Transmembrane protease serine 11B">
    <location>
        <begin position="1"/>
        <end position="416"/>
    </location>
</feature>
<feature type="topological domain" description="Cytoplasmic" evidence="2">
    <location>
        <begin position="1"/>
        <end position="17"/>
    </location>
</feature>
<feature type="transmembrane region" description="Helical; Signal-anchor for type II membrane protein" evidence="2">
    <location>
        <begin position="18"/>
        <end position="38"/>
    </location>
</feature>
<feature type="topological domain" description="Extracellular" evidence="2">
    <location>
        <begin position="39"/>
        <end position="416"/>
    </location>
</feature>
<feature type="domain" description="SEA" evidence="3">
    <location>
        <begin position="43"/>
        <end position="160"/>
    </location>
</feature>
<feature type="domain" description="Peptidase S1" evidence="4">
    <location>
        <begin position="185"/>
        <end position="415"/>
    </location>
</feature>
<feature type="active site" description="Charge relay system" evidence="1">
    <location>
        <position position="225"/>
    </location>
</feature>
<feature type="active site" description="Charge relay system" evidence="1">
    <location>
        <position position="270"/>
    </location>
</feature>
<feature type="active site" description="Charge relay system" evidence="1">
    <location>
        <position position="366"/>
    </location>
</feature>
<feature type="glycosylation site" description="N-linked (GlcNAc...) asparagine" evidence="2">
    <location>
        <position position="72"/>
    </location>
</feature>
<feature type="glycosylation site" description="N-linked (GlcNAc...) asparagine" evidence="2">
    <location>
        <position position="107"/>
    </location>
</feature>
<feature type="glycosylation site" description="N-linked (GlcNAc...) asparagine" evidence="2">
    <location>
        <position position="315"/>
    </location>
</feature>
<feature type="disulfide bond" evidence="4">
    <location>
        <begin position="210"/>
        <end position="226"/>
    </location>
</feature>
<feature type="disulfide bond" evidence="4">
    <location>
        <begin position="335"/>
        <end position="351"/>
    </location>
</feature>
<feature type="disulfide bond" evidence="4">
    <location>
        <begin position="362"/>
        <end position="391"/>
    </location>
</feature>
<feature type="sequence variant" id="VAR_034798" description="In dbSNP:rs12331141." evidence="5 6 7">
    <original>I</original>
    <variation>V</variation>
    <location>
        <position position="242"/>
    </location>
</feature>
<feature type="sequence variant" id="VAR_047675" description="In dbSNP:rs2319796." evidence="6 7">
    <original>D</original>
    <variation>A</variation>
    <location>
        <position position="325"/>
    </location>
</feature>
<feature type="sequence variant" id="VAR_034799" description="In dbSNP:rs2319797." evidence="6 7">
    <original>T</original>
    <variation>S</variation>
    <location>
        <position position="348"/>
    </location>
</feature>
<sequence length="416" mass="46337">MYRHGISSQRSWPLWTTIFIFLGVAAILGVTIGLLVHFLAVEKTYYYQGDFHISGVTYNDNCENAASQASTNLSKDIETKMLNAFQNSSIYKEYVKSEVIKLLPNANGSNVQLQLKFKFPPAEGVSMRTKIKAKLHQMLKNNMASWNAVPASIKLMEISKAASEMLTNNCCGRQVANSIITGNKIVNGKSSLEGAWPWQASMQWKGRHYCGASLISSRWLLSAAHCFAKKNNSKDWTVNFGIVVNKPYMTRKVQNIIFHENYSSPGLHDDIALVQLAEEVSFTEYIRKICLPEAKMKLSENDNVVVTGWGTLYMNGSFPVILQEDFLKIIDNKICNASYAYSGFVTDTMLCAGFMSGEADACQNDSGGPLAYPDSRNIWHLVGIVSWGDGCGKKNKPGVYTRVTSYRNWITSKTGL</sequence>
<evidence type="ECO:0000250" key="1"/>
<evidence type="ECO:0000255" key="2"/>
<evidence type="ECO:0000255" key="3">
    <source>
        <dbReference type="PROSITE-ProRule" id="PRU00188"/>
    </source>
</evidence>
<evidence type="ECO:0000255" key="4">
    <source>
        <dbReference type="PROSITE-ProRule" id="PRU00274"/>
    </source>
</evidence>
<evidence type="ECO:0000269" key="5">
    <source>
    </source>
</evidence>
<evidence type="ECO:0000269" key="6">
    <source>
    </source>
</evidence>
<evidence type="ECO:0000269" key="7">
    <source>
    </source>
</evidence>
<evidence type="ECO:0000269" key="8">
    <source>
    </source>
</evidence>
<evidence type="ECO:0000305" key="9"/>
<comment type="function">
    <text evidence="8">Serine protease.</text>
</comment>
<comment type="activity regulation">
    <text evidence="8">Inhibited by aprotinin, leupeptin, benzamidine, SERPINA1, SPINT1 and SPINT2.</text>
</comment>
<comment type="subcellular location">
    <subcellularLocation>
        <location evidence="8">Cell membrane</location>
        <topology evidence="9">Single-pass type II membrane protein</topology>
    </subcellularLocation>
</comment>
<comment type="similarity">
    <text evidence="4">Belongs to the peptidase S1 family.</text>
</comment>
<keyword id="KW-1003">Cell membrane</keyword>
<keyword id="KW-1015">Disulfide bond</keyword>
<keyword id="KW-0325">Glycoprotein</keyword>
<keyword id="KW-0378">Hydrolase</keyword>
<keyword id="KW-0472">Membrane</keyword>
<keyword id="KW-0645">Protease</keyword>
<keyword id="KW-1267">Proteomics identification</keyword>
<keyword id="KW-1185">Reference proteome</keyword>
<keyword id="KW-0720">Serine protease</keyword>
<keyword id="KW-0735">Signal-anchor</keyword>
<keyword id="KW-0812">Transmembrane</keyword>
<keyword id="KW-1133">Transmembrane helix</keyword>
<gene>
    <name type="primary">TMPRSS11B</name>
    <name type="synonym">HATL5</name>
</gene>
<dbReference type="EC" id="3.4.21.-"/>
<dbReference type="EMBL" id="AK290904">
    <property type="protein sequence ID" value="BAF83593.1"/>
    <property type="molecule type" value="mRNA"/>
</dbReference>
<dbReference type="EMBL" id="AL833167">
    <property type="protein sequence ID" value="CAD91168.1"/>
    <property type="molecule type" value="mRNA"/>
</dbReference>
<dbReference type="EMBL" id="BX537945">
    <property type="protein sequence ID" value="CAD97913.1"/>
    <property type="molecule type" value="mRNA"/>
</dbReference>
<dbReference type="EMBL" id="AC098799">
    <property type="status" value="NOT_ANNOTATED_CDS"/>
    <property type="molecule type" value="Genomic_DNA"/>
</dbReference>
<dbReference type="EMBL" id="BC126195">
    <property type="protein sequence ID" value="AAI26196.1"/>
    <property type="molecule type" value="mRNA"/>
</dbReference>
<dbReference type="CCDS" id="CCDS3521.1"/>
<dbReference type="RefSeq" id="NP_872308.2">
    <property type="nucleotide sequence ID" value="NM_182502.3"/>
</dbReference>
<dbReference type="RefSeq" id="XP_011529910.1">
    <property type="nucleotide sequence ID" value="XM_011531608.3"/>
</dbReference>
<dbReference type="SMR" id="Q86T26"/>
<dbReference type="BioGRID" id="126334">
    <property type="interactions" value="433"/>
</dbReference>
<dbReference type="FunCoup" id="Q86T26">
    <property type="interactions" value="109"/>
</dbReference>
<dbReference type="IntAct" id="Q86T26">
    <property type="interactions" value="85"/>
</dbReference>
<dbReference type="STRING" id="9606.ENSP00000330475"/>
<dbReference type="MEROPS" id="S01.365"/>
<dbReference type="GlyCosmos" id="Q86T26">
    <property type="glycosylation" value="3 sites, No reported glycans"/>
</dbReference>
<dbReference type="GlyGen" id="Q86T26">
    <property type="glycosylation" value="3 sites"/>
</dbReference>
<dbReference type="PhosphoSitePlus" id="Q86T26"/>
<dbReference type="BioMuta" id="TMPRSS11B"/>
<dbReference type="DMDM" id="317373502"/>
<dbReference type="jPOST" id="Q86T26"/>
<dbReference type="MassIVE" id="Q86T26"/>
<dbReference type="PaxDb" id="9606-ENSP00000330475"/>
<dbReference type="PeptideAtlas" id="Q86T26"/>
<dbReference type="PRIDE" id="Q86T26"/>
<dbReference type="ProteomicsDB" id="69661"/>
<dbReference type="Pumba" id="Q86T26"/>
<dbReference type="Antibodypedia" id="24170">
    <property type="antibodies" value="67 antibodies from 16 providers"/>
</dbReference>
<dbReference type="DNASU" id="132724"/>
<dbReference type="Ensembl" id="ENST00000332644.6">
    <property type="protein sequence ID" value="ENSP00000330475.5"/>
    <property type="gene ID" value="ENSG00000185873.8"/>
</dbReference>
<dbReference type="GeneID" id="132724"/>
<dbReference type="KEGG" id="hsa:132724"/>
<dbReference type="MANE-Select" id="ENST00000332644.6">
    <property type="protein sequence ID" value="ENSP00000330475.5"/>
    <property type="RefSeq nucleotide sequence ID" value="NM_182502.3"/>
    <property type="RefSeq protein sequence ID" value="NP_872308.2"/>
</dbReference>
<dbReference type="UCSC" id="uc003hdw.5">
    <property type="organism name" value="human"/>
</dbReference>
<dbReference type="AGR" id="HGNC:25398"/>
<dbReference type="CTD" id="132724"/>
<dbReference type="DisGeNET" id="132724"/>
<dbReference type="GeneCards" id="TMPRSS11B"/>
<dbReference type="HGNC" id="HGNC:25398">
    <property type="gene designation" value="TMPRSS11B"/>
</dbReference>
<dbReference type="HPA" id="ENSG00000185873">
    <property type="expression patterns" value="Tissue enhanced (esophagus, lymphoid tissue, vagina)"/>
</dbReference>
<dbReference type="neXtProt" id="NX_Q86T26"/>
<dbReference type="OpenTargets" id="ENSG00000185873"/>
<dbReference type="PharmGKB" id="PA142670727"/>
<dbReference type="VEuPathDB" id="HostDB:ENSG00000185873"/>
<dbReference type="eggNOG" id="KOG3627">
    <property type="taxonomic scope" value="Eukaryota"/>
</dbReference>
<dbReference type="GeneTree" id="ENSGT00940000163500"/>
<dbReference type="HOGENOM" id="CLU_006842_19_0_1"/>
<dbReference type="InParanoid" id="Q86T26"/>
<dbReference type="OMA" id="ADACQND"/>
<dbReference type="OrthoDB" id="9425590at2759"/>
<dbReference type="PAN-GO" id="Q86T26">
    <property type="GO annotations" value="1 GO annotation based on evolutionary models"/>
</dbReference>
<dbReference type="PhylomeDB" id="Q86T26"/>
<dbReference type="TreeFam" id="TF351684"/>
<dbReference type="PathwayCommons" id="Q86T26"/>
<dbReference type="SignaLink" id="Q86T26"/>
<dbReference type="BioGRID-ORCS" id="132724">
    <property type="hits" value="8 hits in 1140 CRISPR screens"/>
</dbReference>
<dbReference type="ChiTaRS" id="TMPRSS11B">
    <property type="organism name" value="human"/>
</dbReference>
<dbReference type="GenomeRNAi" id="132724"/>
<dbReference type="Pharos" id="Q86T26">
    <property type="development level" value="Tdark"/>
</dbReference>
<dbReference type="PRO" id="PR:Q86T26"/>
<dbReference type="Proteomes" id="UP000005640">
    <property type="component" value="Chromosome 4"/>
</dbReference>
<dbReference type="RNAct" id="Q86T26">
    <property type="molecule type" value="protein"/>
</dbReference>
<dbReference type="Bgee" id="ENSG00000185873">
    <property type="expression patterns" value="Expressed in lower esophagus mucosa and 95 other cell types or tissues"/>
</dbReference>
<dbReference type="GO" id="GO:0070062">
    <property type="term" value="C:extracellular exosome"/>
    <property type="evidence" value="ECO:0007005"/>
    <property type="project" value="UniProtKB"/>
</dbReference>
<dbReference type="GO" id="GO:0005886">
    <property type="term" value="C:plasma membrane"/>
    <property type="evidence" value="ECO:0000314"/>
    <property type="project" value="UniProtKB"/>
</dbReference>
<dbReference type="GO" id="GO:0004252">
    <property type="term" value="F:serine-type endopeptidase activity"/>
    <property type="evidence" value="ECO:0007669"/>
    <property type="project" value="InterPro"/>
</dbReference>
<dbReference type="GO" id="GO:0008236">
    <property type="term" value="F:serine-type peptidase activity"/>
    <property type="evidence" value="ECO:0000314"/>
    <property type="project" value="UniProtKB"/>
</dbReference>
<dbReference type="GO" id="GO:0006508">
    <property type="term" value="P:proteolysis"/>
    <property type="evidence" value="ECO:0007669"/>
    <property type="project" value="UniProtKB-KW"/>
</dbReference>
<dbReference type="CDD" id="cd00190">
    <property type="entry name" value="Tryp_SPc"/>
    <property type="match status" value="1"/>
</dbReference>
<dbReference type="FunFam" id="3.30.70.960:FF:000011">
    <property type="entry name" value="Transmembrane protease serine"/>
    <property type="match status" value="1"/>
</dbReference>
<dbReference type="FunFam" id="2.40.10.10:FF:000003">
    <property type="entry name" value="Transmembrane serine protease 3"/>
    <property type="match status" value="1"/>
</dbReference>
<dbReference type="Gene3D" id="3.30.70.960">
    <property type="entry name" value="SEA domain"/>
    <property type="match status" value="1"/>
</dbReference>
<dbReference type="Gene3D" id="2.40.10.10">
    <property type="entry name" value="Trypsin-like serine proteases"/>
    <property type="match status" value="2"/>
</dbReference>
<dbReference type="InterPro" id="IPR017329">
    <property type="entry name" value="Pept_S1A_HAT/DESC1"/>
</dbReference>
<dbReference type="InterPro" id="IPR009003">
    <property type="entry name" value="Peptidase_S1_PA"/>
</dbReference>
<dbReference type="InterPro" id="IPR043504">
    <property type="entry name" value="Peptidase_S1_PA_chymotrypsin"/>
</dbReference>
<dbReference type="InterPro" id="IPR001314">
    <property type="entry name" value="Peptidase_S1A"/>
</dbReference>
<dbReference type="InterPro" id="IPR000082">
    <property type="entry name" value="SEA_dom"/>
</dbReference>
<dbReference type="InterPro" id="IPR036364">
    <property type="entry name" value="SEA_dom_sf"/>
</dbReference>
<dbReference type="InterPro" id="IPR001254">
    <property type="entry name" value="Trypsin_dom"/>
</dbReference>
<dbReference type="InterPro" id="IPR018114">
    <property type="entry name" value="TRYPSIN_HIS"/>
</dbReference>
<dbReference type="PANTHER" id="PTHR24252">
    <property type="entry name" value="ACROSIN-RELATED"/>
    <property type="match status" value="1"/>
</dbReference>
<dbReference type="PANTHER" id="PTHR24252:SF7">
    <property type="entry name" value="HYALIN"/>
    <property type="match status" value="1"/>
</dbReference>
<dbReference type="Pfam" id="PF01390">
    <property type="entry name" value="SEA"/>
    <property type="match status" value="1"/>
</dbReference>
<dbReference type="Pfam" id="PF00089">
    <property type="entry name" value="Trypsin"/>
    <property type="match status" value="1"/>
</dbReference>
<dbReference type="PIRSF" id="PIRSF037941">
    <property type="entry name" value="TMPRSS11ABCDE"/>
    <property type="match status" value="1"/>
</dbReference>
<dbReference type="PRINTS" id="PR00722">
    <property type="entry name" value="CHYMOTRYPSIN"/>
</dbReference>
<dbReference type="SMART" id="SM00020">
    <property type="entry name" value="Tryp_SPc"/>
    <property type="match status" value="1"/>
</dbReference>
<dbReference type="SUPFAM" id="SSF82671">
    <property type="entry name" value="SEA domain"/>
    <property type="match status" value="1"/>
</dbReference>
<dbReference type="SUPFAM" id="SSF50494">
    <property type="entry name" value="Trypsin-like serine proteases"/>
    <property type="match status" value="1"/>
</dbReference>
<dbReference type="PROSITE" id="PS50024">
    <property type="entry name" value="SEA"/>
    <property type="match status" value="1"/>
</dbReference>
<dbReference type="PROSITE" id="PS50240">
    <property type="entry name" value="TRYPSIN_DOM"/>
    <property type="match status" value="1"/>
</dbReference>
<dbReference type="PROSITE" id="PS00134">
    <property type="entry name" value="TRYPSIN_HIS"/>
    <property type="match status" value="1"/>
</dbReference>